<keyword id="KW-0963">Cytoplasm</keyword>
<keyword id="KW-0251">Elongation factor</keyword>
<keyword id="KW-0648">Protein biosynthesis</keyword>
<evidence type="ECO:0000255" key="1">
    <source>
        <dbReference type="HAMAP-Rule" id="MF_00050"/>
    </source>
</evidence>
<organism>
    <name type="scientific">Chlorobaculum parvum (strain DSM 263 / NCIMB 8327)</name>
    <name type="common">Chlorobium vibrioforme subsp. thiosulfatophilum</name>
    <dbReference type="NCBI Taxonomy" id="517417"/>
    <lineage>
        <taxon>Bacteria</taxon>
        <taxon>Pseudomonadati</taxon>
        <taxon>Chlorobiota</taxon>
        <taxon>Chlorobiia</taxon>
        <taxon>Chlorobiales</taxon>
        <taxon>Chlorobiaceae</taxon>
        <taxon>Chlorobaculum</taxon>
    </lineage>
</organism>
<reference key="1">
    <citation type="submission" date="2008-06" db="EMBL/GenBank/DDBJ databases">
        <title>Complete sequence of Chlorobaculum parvum NCIB 8327.</title>
        <authorList>
            <consortium name="US DOE Joint Genome Institute"/>
            <person name="Lucas S."/>
            <person name="Copeland A."/>
            <person name="Lapidus A."/>
            <person name="Glavina del Rio T."/>
            <person name="Dalin E."/>
            <person name="Tice H."/>
            <person name="Bruce D."/>
            <person name="Goodwin L."/>
            <person name="Pitluck S."/>
            <person name="Schmutz J."/>
            <person name="Larimer F."/>
            <person name="Land M."/>
            <person name="Hauser L."/>
            <person name="Kyrpides N."/>
            <person name="Mikhailova N."/>
            <person name="Zhao F."/>
            <person name="Li T."/>
            <person name="Liu Z."/>
            <person name="Overmann J."/>
            <person name="Bryant D.A."/>
            <person name="Richardson P."/>
        </authorList>
    </citation>
    <scope>NUCLEOTIDE SEQUENCE [LARGE SCALE GENOMIC DNA]</scope>
    <source>
        <strain>DSM 263 / NCIMB 8327</strain>
    </source>
</reference>
<comment type="function">
    <text evidence="1">Associates with the EF-Tu.GDP complex and induces the exchange of GDP to GTP. It remains bound to the aminoacyl-tRNA.EF-Tu.GTP complex up to the GTP hydrolysis stage on the ribosome.</text>
</comment>
<comment type="subcellular location">
    <subcellularLocation>
        <location evidence="1">Cytoplasm</location>
    </subcellularLocation>
</comment>
<comment type="similarity">
    <text evidence="1">Belongs to the EF-Ts family.</text>
</comment>
<gene>
    <name evidence="1" type="primary">tsf</name>
    <name type="ordered locus">Cpar_0426</name>
</gene>
<accession>B3QLF8</accession>
<name>EFTS_CHLP8</name>
<dbReference type="EMBL" id="CP001099">
    <property type="protein sequence ID" value="ACF10848.1"/>
    <property type="molecule type" value="Genomic_DNA"/>
</dbReference>
<dbReference type="RefSeq" id="WP_012501681.1">
    <property type="nucleotide sequence ID" value="NC_011027.1"/>
</dbReference>
<dbReference type="SMR" id="B3QLF8"/>
<dbReference type="STRING" id="517417.Cpar_0426"/>
<dbReference type="KEGG" id="cpc:Cpar_0426"/>
<dbReference type="eggNOG" id="COG0264">
    <property type="taxonomic scope" value="Bacteria"/>
</dbReference>
<dbReference type="HOGENOM" id="CLU_047155_0_0_10"/>
<dbReference type="OrthoDB" id="9808348at2"/>
<dbReference type="Proteomes" id="UP000008811">
    <property type="component" value="Chromosome"/>
</dbReference>
<dbReference type="GO" id="GO:0005737">
    <property type="term" value="C:cytoplasm"/>
    <property type="evidence" value="ECO:0007669"/>
    <property type="project" value="UniProtKB-SubCell"/>
</dbReference>
<dbReference type="GO" id="GO:0003746">
    <property type="term" value="F:translation elongation factor activity"/>
    <property type="evidence" value="ECO:0007669"/>
    <property type="project" value="UniProtKB-UniRule"/>
</dbReference>
<dbReference type="CDD" id="cd14275">
    <property type="entry name" value="UBA_EF-Ts"/>
    <property type="match status" value="1"/>
</dbReference>
<dbReference type="FunFam" id="1.10.286.20:FF:000001">
    <property type="entry name" value="Elongation factor Ts"/>
    <property type="match status" value="1"/>
</dbReference>
<dbReference type="FunFam" id="1.10.8.10:FF:000001">
    <property type="entry name" value="Elongation factor Ts"/>
    <property type="match status" value="1"/>
</dbReference>
<dbReference type="Gene3D" id="1.10.286.20">
    <property type="match status" value="1"/>
</dbReference>
<dbReference type="Gene3D" id="1.10.8.10">
    <property type="entry name" value="DNA helicase RuvA subunit, C-terminal domain"/>
    <property type="match status" value="1"/>
</dbReference>
<dbReference type="Gene3D" id="3.30.479.20">
    <property type="entry name" value="Elongation factor Ts, dimerisation domain"/>
    <property type="match status" value="2"/>
</dbReference>
<dbReference type="HAMAP" id="MF_00050">
    <property type="entry name" value="EF_Ts"/>
    <property type="match status" value="1"/>
</dbReference>
<dbReference type="InterPro" id="IPR036402">
    <property type="entry name" value="EF-Ts_dimer_sf"/>
</dbReference>
<dbReference type="InterPro" id="IPR001816">
    <property type="entry name" value="Transl_elong_EFTs/EF1B"/>
</dbReference>
<dbReference type="InterPro" id="IPR014039">
    <property type="entry name" value="Transl_elong_EFTs/EF1B_dimer"/>
</dbReference>
<dbReference type="InterPro" id="IPR018101">
    <property type="entry name" value="Transl_elong_Ts_CS"/>
</dbReference>
<dbReference type="InterPro" id="IPR009060">
    <property type="entry name" value="UBA-like_sf"/>
</dbReference>
<dbReference type="NCBIfam" id="TIGR00116">
    <property type="entry name" value="tsf"/>
    <property type="match status" value="1"/>
</dbReference>
<dbReference type="PANTHER" id="PTHR11741">
    <property type="entry name" value="ELONGATION FACTOR TS"/>
    <property type="match status" value="1"/>
</dbReference>
<dbReference type="PANTHER" id="PTHR11741:SF0">
    <property type="entry name" value="ELONGATION FACTOR TS, MITOCHONDRIAL"/>
    <property type="match status" value="1"/>
</dbReference>
<dbReference type="Pfam" id="PF00889">
    <property type="entry name" value="EF_TS"/>
    <property type="match status" value="1"/>
</dbReference>
<dbReference type="SUPFAM" id="SSF54713">
    <property type="entry name" value="Elongation factor Ts (EF-Ts), dimerisation domain"/>
    <property type="match status" value="2"/>
</dbReference>
<dbReference type="SUPFAM" id="SSF46934">
    <property type="entry name" value="UBA-like"/>
    <property type="match status" value="1"/>
</dbReference>
<dbReference type="PROSITE" id="PS01126">
    <property type="entry name" value="EF_TS_1"/>
    <property type="match status" value="1"/>
</dbReference>
<dbReference type="PROSITE" id="PS01127">
    <property type="entry name" value="EF_TS_2"/>
    <property type="match status" value="1"/>
</dbReference>
<proteinExistence type="inferred from homology"/>
<feature type="chain" id="PRO_1000116709" description="Elongation factor Ts">
    <location>
        <begin position="1"/>
        <end position="288"/>
    </location>
</feature>
<feature type="region of interest" description="Involved in Mg(2+) ion dislocation from EF-Tu" evidence="1">
    <location>
        <begin position="82"/>
        <end position="85"/>
    </location>
</feature>
<sequence length="288" mass="31635">MSQISAKDVKELRDTTGVGMMECKKALEETGGDMQKAVEYLRKKGAAMAAKRADREASEGAVCILMSDDQKTGVILELNCETDFVARGEVFTGFANELAELALANNCESREDLLAINLGEAYGNEKVEDALKSMTGKVGEKLELKRLAMLKAEDGVLESYIHPGSQLGALIAVETDKPEETKALAKDLAMQVAAASPIEVGRDAVPAELVEKEKEIYRQQALAEGKKEEFVDKIVMGRINKYYQEVVLTEQTFIKDQNARVSGVLDDFMKKNQAQVKIKAFVRYQLGA</sequence>
<protein>
    <recommendedName>
        <fullName evidence="1">Elongation factor Ts</fullName>
        <shortName evidence="1">EF-Ts</shortName>
    </recommendedName>
</protein>